<keyword id="KW-0175">Coiled coil</keyword>
<keyword id="KW-1267">Proteomics identification</keyword>
<keyword id="KW-1185">Reference proteome</keyword>
<protein>
    <recommendedName>
        <fullName evidence="3">Coiled-coil domain-containing protein 196</fullName>
    </recommendedName>
    <alternativeName>
        <fullName evidence="4">Long intergenic non-protein coding RNA 238</fullName>
    </alternativeName>
</protein>
<feature type="chain" id="PRO_0000441410" description="Coiled-coil domain-containing protein 196">
    <location>
        <begin position="1"/>
        <end position="297"/>
    </location>
</feature>
<feature type="region of interest" description="Disordered" evidence="2">
    <location>
        <begin position="122"/>
        <end position="161"/>
    </location>
</feature>
<feature type="coiled-coil region" evidence="1">
    <location>
        <begin position="83"/>
        <end position="117"/>
    </location>
</feature>
<feature type="compositionally biased region" description="Basic and acidic residues" evidence="2">
    <location>
        <begin position="135"/>
        <end position="144"/>
    </location>
</feature>
<feature type="compositionally biased region" description="Basic and acidic residues" evidence="2">
    <location>
        <begin position="152"/>
        <end position="161"/>
    </location>
</feature>
<gene>
    <name evidence="4" type="primary">CCDC196</name>
    <name evidence="4" type="synonym">C14orf53</name>
    <name evidence="4" type="synonym">LINC00238</name>
    <name evidence="4" type="synonym">NCRNA00238</name>
</gene>
<proteinExistence type="evidence at protein level"/>
<dbReference type="EMBL" id="AL355093">
    <property type="status" value="NOT_ANNOTATED_CDS"/>
    <property type="molecule type" value="Genomic_DNA"/>
</dbReference>
<dbReference type="CCDS" id="CCDS86402.1"/>
<dbReference type="RefSeq" id="NP_001338505.1">
    <property type="nucleotide sequence ID" value="NM_001351576.1"/>
</dbReference>
<dbReference type="SMR" id="A0A1B0GTZ2"/>
<dbReference type="FunCoup" id="A0A1B0GTZ2">
    <property type="interactions" value="5"/>
</dbReference>
<dbReference type="STRING" id="9606.ENSP00000489898"/>
<dbReference type="BioMuta" id="CCDC196"/>
<dbReference type="jPOST" id="A0A1B0GTZ2"/>
<dbReference type="MassIVE" id="A0A1B0GTZ2"/>
<dbReference type="PeptideAtlas" id="A0A1B0GTZ2"/>
<dbReference type="Ensembl" id="ENST00000636229.1">
    <property type="protein sequence ID" value="ENSP00000489898.1"/>
    <property type="gene ID" value="ENSG00000196553.15"/>
</dbReference>
<dbReference type="GeneID" id="440184"/>
<dbReference type="MANE-Select" id="ENST00000636229.1">
    <property type="protein sequence ID" value="ENSP00000489898.1"/>
    <property type="RefSeq nucleotide sequence ID" value="NM_001351576.1"/>
    <property type="RefSeq protein sequence ID" value="NP_001338505.1"/>
</dbReference>
<dbReference type="AGR" id="HGNC:20100"/>
<dbReference type="GeneCards" id="CCDC196"/>
<dbReference type="HGNC" id="HGNC:20100">
    <property type="gene designation" value="CCDC196"/>
</dbReference>
<dbReference type="HPA" id="ENSG00000196553">
    <property type="expression patterns" value="Tissue enriched (testis)"/>
</dbReference>
<dbReference type="neXtProt" id="NX_A0A1B0GTZ2"/>
<dbReference type="OpenTargets" id="ENSG00000196553"/>
<dbReference type="VEuPathDB" id="HostDB:ENSG00000196553"/>
<dbReference type="GeneTree" id="ENSGT00390000007937"/>
<dbReference type="InParanoid" id="A0A1B0GTZ2"/>
<dbReference type="OMA" id="EPKQAYF"/>
<dbReference type="OrthoDB" id="9451755at2759"/>
<dbReference type="PAN-GO" id="A0A1B0GTZ2">
    <property type="GO annotations" value="0 GO annotations based on evolutionary models"/>
</dbReference>
<dbReference type="PathwayCommons" id="A0A1B0GTZ2"/>
<dbReference type="SignaLink" id="A0A1B0GTZ2"/>
<dbReference type="ChiTaRS" id="LINC00238">
    <property type="organism name" value="human"/>
</dbReference>
<dbReference type="Pharos" id="A0A1B0GTZ2">
    <property type="development level" value="Tdark"/>
</dbReference>
<dbReference type="Proteomes" id="UP000005640">
    <property type="component" value="Chromosome 14"/>
</dbReference>
<dbReference type="RNAct" id="A0A1B0GTZ2">
    <property type="molecule type" value="protein"/>
</dbReference>
<dbReference type="Bgee" id="ENSG00000196553">
    <property type="expression patterns" value="Expressed in sperm and 117 other cell types or tissues"/>
</dbReference>
<dbReference type="ExpressionAtlas" id="A0A1B0GTZ2">
    <property type="expression patterns" value="baseline and differential"/>
</dbReference>
<dbReference type="PANTHER" id="PTHR37863">
    <property type="entry name" value="COILED-COIL DOMAIN-CONTAINING PROTEIN 196-RELATED"/>
    <property type="match status" value="1"/>
</dbReference>
<dbReference type="PANTHER" id="PTHR37863:SF1">
    <property type="entry name" value="COILED-COIL DOMAIN-CONTAINING PROTEIN 196-RELATED"/>
    <property type="match status" value="1"/>
</dbReference>
<accession>A0A1B0GTZ2</accession>
<name>CC196_HUMAN</name>
<sequence length="297" mass="34479">MTSGANSSGSYLPSEIRSSKIDDNYLKELNEDLKLRKQELLEMLKPLEDKNNLLFQKLMSNLEEKQRSLQIMRQIMAGKGCEESSVMELLKEAEEMKQNLERKNKMLRKEMEMLWNKTFEAEELSDQQKAPQTKNKADLQDGKAPKSPSSPRKTESELEKSFAEKVKEIRKEKQQRKMEWVKYQEQNNILQNDFHGKVIELRIEALKNYQKANDLKLSLYLQQNFEPMQAFLNLPGSQGTMGITTMDRVTTGRNEHHVRILGTKIYTEQQGTKGSQLDNTGGRLFFLRSLPDEALKN</sequence>
<organism>
    <name type="scientific">Homo sapiens</name>
    <name type="common">Human</name>
    <dbReference type="NCBI Taxonomy" id="9606"/>
    <lineage>
        <taxon>Eukaryota</taxon>
        <taxon>Metazoa</taxon>
        <taxon>Chordata</taxon>
        <taxon>Craniata</taxon>
        <taxon>Vertebrata</taxon>
        <taxon>Euteleostomi</taxon>
        <taxon>Mammalia</taxon>
        <taxon>Eutheria</taxon>
        <taxon>Euarchontoglires</taxon>
        <taxon>Primates</taxon>
        <taxon>Haplorrhini</taxon>
        <taxon>Catarrhini</taxon>
        <taxon>Hominidae</taxon>
        <taxon>Homo</taxon>
    </lineage>
</organism>
<evidence type="ECO:0000255" key="1"/>
<evidence type="ECO:0000256" key="2">
    <source>
        <dbReference type="SAM" id="MobiDB-lite"/>
    </source>
</evidence>
<evidence type="ECO:0000305" key="3"/>
<evidence type="ECO:0000312" key="4">
    <source>
        <dbReference type="HGNC" id="HGNC:20100"/>
    </source>
</evidence>
<reference key="1">
    <citation type="journal article" date="2003" name="Nature">
        <title>The DNA sequence and analysis of human chromosome 14.</title>
        <authorList>
            <person name="Heilig R."/>
            <person name="Eckenberg R."/>
            <person name="Petit J.-L."/>
            <person name="Fonknechten N."/>
            <person name="Da Silva C."/>
            <person name="Cattolico L."/>
            <person name="Levy M."/>
            <person name="Barbe V."/>
            <person name="De Berardinis V."/>
            <person name="Ureta-Vidal A."/>
            <person name="Pelletier E."/>
            <person name="Vico V."/>
            <person name="Anthouard V."/>
            <person name="Rowen L."/>
            <person name="Madan A."/>
            <person name="Qin S."/>
            <person name="Sun H."/>
            <person name="Du H."/>
            <person name="Pepin K."/>
            <person name="Artiguenave F."/>
            <person name="Robert C."/>
            <person name="Cruaud C."/>
            <person name="Bruels T."/>
            <person name="Jaillon O."/>
            <person name="Friedlander L."/>
            <person name="Samson G."/>
            <person name="Brottier P."/>
            <person name="Cure S."/>
            <person name="Segurens B."/>
            <person name="Aniere F."/>
            <person name="Samain S."/>
            <person name="Crespeau H."/>
            <person name="Abbasi N."/>
            <person name="Aiach N."/>
            <person name="Boscus D."/>
            <person name="Dickhoff R."/>
            <person name="Dors M."/>
            <person name="Dubois I."/>
            <person name="Friedman C."/>
            <person name="Gouyvenoux M."/>
            <person name="James R."/>
            <person name="Madan A."/>
            <person name="Mairey-Estrada B."/>
            <person name="Mangenot S."/>
            <person name="Martins N."/>
            <person name="Menard M."/>
            <person name="Oztas S."/>
            <person name="Ratcliffe A."/>
            <person name="Shaffer T."/>
            <person name="Trask B."/>
            <person name="Vacherie B."/>
            <person name="Bellemere C."/>
            <person name="Belser C."/>
            <person name="Besnard-Gonnet M."/>
            <person name="Bartol-Mavel D."/>
            <person name="Boutard M."/>
            <person name="Briez-Silla S."/>
            <person name="Combette S."/>
            <person name="Dufosse-Laurent V."/>
            <person name="Ferron C."/>
            <person name="Lechaplais C."/>
            <person name="Louesse C."/>
            <person name="Muselet D."/>
            <person name="Magdelenat G."/>
            <person name="Pateau E."/>
            <person name="Petit E."/>
            <person name="Sirvain-Trukniewicz P."/>
            <person name="Trybou A."/>
            <person name="Vega-Czarny N."/>
            <person name="Bataille E."/>
            <person name="Bluet E."/>
            <person name="Bordelais I."/>
            <person name="Dubois M."/>
            <person name="Dumont C."/>
            <person name="Guerin T."/>
            <person name="Haffray S."/>
            <person name="Hammadi R."/>
            <person name="Muanga J."/>
            <person name="Pellouin V."/>
            <person name="Robert D."/>
            <person name="Wunderle E."/>
            <person name="Gauguet G."/>
            <person name="Roy A."/>
            <person name="Sainte-Marthe L."/>
            <person name="Verdier J."/>
            <person name="Verdier-Discala C."/>
            <person name="Hillier L.W."/>
            <person name="Fulton L."/>
            <person name="McPherson J."/>
            <person name="Matsuda F."/>
            <person name="Wilson R."/>
            <person name="Scarpelli C."/>
            <person name="Gyapay G."/>
            <person name="Wincker P."/>
            <person name="Saurin W."/>
            <person name="Quetier F."/>
            <person name="Waterston R."/>
            <person name="Hood L."/>
            <person name="Weissenbach J."/>
        </authorList>
    </citation>
    <scope>NUCLEOTIDE SEQUENCE [LARGE SCALE GENOMIC DNA]</scope>
</reference>